<protein>
    <recommendedName>
        <fullName evidence="1">Small ribosomal subunit protein eS6</fullName>
    </recommendedName>
    <alternativeName>
        <fullName evidence="3">30S ribosomal protein S6e</fullName>
    </alternativeName>
</protein>
<sequence>MSEERPPLRIVISDPRAGDRVVRVKVKGVEDIEYTDDMRKTKESDRRRLPIARVSRKLYEELNLGEVGVLTLRFTTPDGKKVKVPFKAEVKEGLEDNVVEVNMELLGEAAGELETEADAFRAKSWQIAVPDDVHVKLAGLEIGDVFDGGLIGMPGLKFKIRGGTDATGIPMHPGVPGSGRYKVLLAGPPGFHPRERGERRRKSVRGRMIPDPRGERRKTALAQLNIVIHYGDKEE</sequence>
<name>RS6E_AERPE</name>
<comment type="similarity">
    <text evidence="1">Belongs to the eukaryotic ribosomal protein eS6 family.</text>
</comment>
<organism>
    <name type="scientific">Aeropyrum pernix (strain ATCC 700893 / DSM 11879 / JCM 9820 / NBRC 100138 / K1)</name>
    <dbReference type="NCBI Taxonomy" id="272557"/>
    <lineage>
        <taxon>Archaea</taxon>
        <taxon>Thermoproteota</taxon>
        <taxon>Thermoprotei</taxon>
        <taxon>Desulfurococcales</taxon>
        <taxon>Desulfurococcaceae</taxon>
        <taxon>Aeropyrum</taxon>
    </lineage>
</organism>
<evidence type="ECO:0000255" key="1">
    <source>
        <dbReference type="HAMAP-Rule" id="MF_00512"/>
    </source>
</evidence>
<evidence type="ECO:0000256" key="2">
    <source>
        <dbReference type="SAM" id="MobiDB-lite"/>
    </source>
</evidence>
<evidence type="ECO:0000305" key="3"/>
<feature type="chain" id="PRO_0000137343" description="Small ribosomal subunit protein eS6">
    <location>
        <begin position="1"/>
        <end position="235"/>
    </location>
</feature>
<feature type="region of interest" description="Disordered" evidence="2">
    <location>
        <begin position="190"/>
        <end position="212"/>
    </location>
</feature>
<dbReference type="EMBL" id="BA000002">
    <property type="protein sequence ID" value="BAA81384.2"/>
    <property type="molecule type" value="Genomic_DNA"/>
</dbReference>
<dbReference type="PIR" id="H72465">
    <property type="entry name" value="H72465"/>
</dbReference>
<dbReference type="RefSeq" id="WP_010866969.1">
    <property type="nucleotide sequence ID" value="NC_000854.2"/>
</dbReference>
<dbReference type="SMR" id="Q9Y9B6"/>
<dbReference type="STRING" id="272557.APE_2371.1"/>
<dbReference type="EnsemblBacteria" id="BAA81384">
    <property type="protein sequence ID" value="BAA81384"/>
    <property type="gene ID" value="APE_2371.1"/>
</dbReference>
<dbReference type="GeneID" id="1445378"/>
<dbReference type="KEGG" id="ape:APE_2371.1"/>
<dbReference type="eggNOG" id="arCOG01946">
    <property type="taxonomic scope" value="Archaea"/>
</dbReference>
<dbReference type="Proteomes" id="UP000002518">
    <property type="component" value="Chromosome"/>
</dbReference>
<dbReference type="GO" id="GO:1990904">
    <property type="term" value="C:ribonucleoprotein complex"/>
    <property type="evidence" value="ECO:0007669"/>
    <property type="project" value="UniProtKB-KW"/>
</dbReference>
<dbReference type="GO" id="GO:0005840">
    <property type="term" value="C:ribosome"/>
    <property type="evidence" value="ECO:0007669"/>
    <property type="project" value="UniProtKB-KW"/>
</dbReference>
<dbReference type="GO" id="GO:0003735">
    <property type="term" value="F:structural constituent of ribosome"/>
    <property type="evidence" value="ECO:0007669"/>
    <property type="project" value="InterPro"/>
</dbReference>
<dbReference type="GO" id="GO:0006412">
    <property type="term" value="P:translation"/>
    <property type="evidence" value="ECO:0007669"/>
    <property type="project" value="UniProtKB-UniRule"/>
</dbReference>
<dbReference type="HAMAP" id="MF_00512">
    <property type="entry name" value="Ribosomal_eS6"/>
    <property type="match status" value="1"/>
</dbReference>
<dbReference type="InterPro" id="IPR001377">
    <property type="entry name" value="Ribosomal_eS6"/>
</dbReference>
<dbReference type="InterPro" id="IPR020924">
    <property type="entry name" value="Ribosomal_eS6_arc"/>
</dbReference>
<dbReference type="InterPro" id="IPR018282">
    <property type="entry name" value="Ribosomal_eS6_CS"/>
</dbReference>
<dbReference type="PANTHER" id="PTHR11502">
    <property type="entry name" value="40S RIBOSOMAL PROTEIN S6"/>
    <property type="match status" value="1"/>
</dbReference>
<dbReference type="Pfam" id="PF01092">
    <property type="entry name" value="Ribosomal_S6e"/>
    <property type="match status" value="1"/>
</dbReference>
<dbReference type="SMART" id="SM01405">
    <property type="entry name" value="Ribosomal_S6e"/>
    <property type="match status" value="1"/>
</dbReference>
<dbReference type="PROSITE" id="PS00578">
    <property type="entry name" value="RIBOSOMAL_S6E"/>
    <property type="match status" value="1"/>
</dbReference>
<gene>
    <name evidence="1" type="primary">rps6e</name>
    <name type="ordered locus">APE_2371.1</name>
</gene>
<accession>Q9Y9B6</accession>
<keyword id="KW-1185">Reference proteome</keyword>
<keyword id="KW-0687">Ribonucleoprotein</keyword>
<keyword id="KW-0689">Ribosomal protein</keyword>
<proteinExistence type="inferred from homology"/>
<reference key="1">
    <citation type="journal article" date="1999" name="DNA Res.">
        <title>Complete genome sequence of an aerobic hyper-thermophilic crenarchaeon, Aeropyrum pernix K1.</title>
        <authorList>
            <person name="Kawarabayasi Y."/>
            <person name="Hino Y."/>
            <person name="Horikawa H."/>
            <person name="Yamazaki S."/>
            <person name="Haikawa Y."/>
            <person name="Jin-no K."/>
            <person name="Takahashi M."/>
            <person name="Sekine M."/>
            <person name="Baba S."/>
            <person name="Ankai A."/>
            <person name="Kosugi H."/>
            <person name="Hosoyama A."/>
            <person name="Fukui S."/>
            <person name="Nagai Y."/>
            <person name="Nishijima K."/>
            <person name="Nakazawa H."/>
            <person name="Takamiya M."/>
            <person name="Masuda S."/>
            <person name="Funahashi T."/>
            <person name="Tanaka T."/>
            <person name="Kudoh Y."/>
            <person name="Yamazaki J."/>
            <person name="Kushida N."/>
            <person name="Oguchi A."/>
            <person name="Aoki K."/>
            <person name="Kubota K."/>
            <person name="Nakamura Y."/>
            <person name="Nomura N."/>
            <person name="Sako Y."/>
            <person name="Kikuchi H."/>
        </authorList>
    </citation>
    <scope>NUCLEOTIDE SEQUENCE [LARGE SCALE GENOMIC DNA]</scope>
    <source>
        <strain>ATCC 700893 / DSM 11879 / JCM 9820 / NBRC 100138 / K1</strain>
    </source>
</reference>